<gene>
    <name evidence="1" type="primary">greA</name>
    <name type="ordered locus">SaurJH9_1667</name>
</gene>
<keyword id="KW-0175">Coiled coil</keyword>
<keyword id="KW-0238">DNA-binding</keyword>
<keyword id="KW-0804">Transcription</keyword>
<keyword id="KW-0805">Transcription regulation</keyword>
<organism>
    <name type="scientific">Staphylococcus aureus (strain JH9)</name>
    <dbReference type="NCBI Taxonomy" id="359786"/>
    <lineage>
        <taxon>Bacteria</taxon>
        <taxon>Bacillati</taxon>
        <taxon>Bacillota</taxon>
        <taxon>Bacilli</taxon>
        <taxon>Bacillales</taxon>
        <taxon>Staphylococcaceae</taxon>
        <taxon>Staphylococcus</taxon>
    </lineage>
</organism>
<dbReference type="EMBL" id="CP000703">
    <property type="protein sequence ID" value="ABQ49458.1"/>
    <property type="molecule type" value="Genomic_DNA"/>
</dbReference>
<dbReference type="RefSeq" id="WP_000431312.1">
    <property type="nucleotide sequence ID" value="NC_009487.1"/>
</dbReference>
<dbReference type="SMR" id="A5ITD5"/>
<dbReference type="KEGG" id="saj:SaurJH9_1667"/>
<dbReference type="HOGENOM" id="CLU_101379_2_1_9"/>
<dbReference type="GO" id="GO:0003677">
    <property type="term" value="F:DNA binding"/>
    <property type="evidence" value="ECO:0007669"/>
    <property type="project" value="UniProtKB-UniRule"/>
</dbReference>
<dbReference type="GO" id="GO:0070063">
    <property type="term" value="F:RNA polymerase binding"/>
    <property type="evidence" value="ECO:0007669"/>
    <property type="project" value="InterPro"/>
</dbReference>
<dbReference type="GO" id="GO:0006354">
    <property type="term" value="P:DNA-templated transcription elongation"/>
    <property type="evidence" value="ECO:0007669"/>
    <property type="project" value="TreeGrafter"/>
</dbReference>
<dbReference type="GO" id="GO:0032784">
    <property type="term" value="P:regulation of DNA-templated transcription elongation"/>
    <property type="evidence" value="ECO:0007669"/>
    <property type="project" value="UniProtKB-UniRule"/>
</dbReference>
<dbReference type="FunFam" id="1.10.287.180:FF:000001">
    <property type="entry name" value="Transcription elongation factor GreA"/>
    <property type="match status" value="1"/>
</dbReference>
<dbReference type="FunFam" id="3.10.50.30:FF:000001">
    <property type="entry name" value="Transcription elongation factor GreA"/>
    <property type="match status" value="1"/>
</dbReference>
<dbReference type="Gene3D" id="3.10.50.30">
    <property type="entry name" value="Transcription elongation factor, GreA/GreB, C-terminal domain"/>
    <property type="match status" value="1"/>
</dbReference>
<dbReference type="Gene3D" id="1.10.287.180">
    <property type="entry name" value="Transcription elongation factor, GreA/GreB, N-terminal domain"/>
    <property type="match status" value="1"/>
</dbReference>
<dbReference type="HAMAP" id="MF_00105">
    <property type="entry name" value="GreA_GreB"/>
    <property type="match status" value="1"/>
</dbReference>
<dbReference type="InterPro" id="IPR036953">
    <property type="entry name" value="GreA/GreB_C_sf"/>
</dbReference>
<dbReference type="InterPro" id="IPR018151">
    <property type="entry name" value="TF_GreA/GreB_CS"/>
</dbReference>
<dbReference type="InterPro" id="IPR006359">
    <property type="entry name" value="Tscrpt_elong_fac_GreA"/>
</dbReference>
<dbReference type="InterPro" id="IPR028624">
    <property type="entry name" value="Tscrpt_elong_fac_GreA/B"/>
</dbReference>
<dbReference type="InterPro" id="IPR001437">
    <property type="entry name" value="Tscrpt_elong_fac_GreA/B_C"/>
</dbReference>
<dbReference type="InterPro" id="IPR023459">
    <property type="entry name" value="Tscrpt_elong_fac_GreA/B_fam"/>
</dbReference>
<dbReference type="InterPro" id="IPR022691">
    <property type="entry name" value="Tscrpt_elong_fac_GreA/B_N"/>
</dbReference>
<dbReference type="InterPro" id="IPR036805">
    <property type="entry name" value="Tscrpt_elong_fac_GreA/B_N_sf"/>
</dbReference>
<dbReference type="NCBIfam" id="TIGR01462">
    <property type="entry name" value="greA"/>
    <property type="match status" value="1"/>
</dbReference>
<dbReference type="NCBIfam" id="NF001261">
    <property type="entry name" value="PRK00226.1-2"/>
    <property type="match status" value="1"/>
</dbReference>
<dbReference type="NCBIfam" id="NF001263">
    <property type="entry name" value="PRK00226.1-4"/>
    <property type="match status" value="1"/>
</dbReference>
<dbReference type="PANTHER" id="PTHR30437">
    <property type="entry name" value="TRANSCRIPTION ELONGATION FACTOR GREA"/>
    <property type="match status" value="1"/>
</dbReference>
<dbReference type="PANTHER" id="PTHR30437:SF4">
    <property type="entry name" value="TRANSCRIPTION ELONGATION FACTOR GREA"/>
    <property type="match status" value="1"/>
</dbReference>
<dbReference type="Pfam" id="PF01272">
    <property type="entry name" value="GreA_GreB"/>
    <property type="match status" value="1"/>
</dbReference>
<dbReference type="Pfam" id="PF03449">
    <property type="entry name" value="GreA_GreB_N"/>
    <property type="match status" value="1"/>
</dbReference>
<dbReference type="PIRSF" id="PIRSF006092">
    <property type="entry name" value="GreA_GreB"/>
    <property type="match status" value="1"/>
</dbReference>
<dbReference type="SUPFAM" id="SSF54534">
    <property type="entry name" value="FKBP-like"/>
    <property type="match status" value="1"/>
</dbReference>
<dbReference type="SUPFAM" id="SSF46557">
    <property type="entry name" value="GreA transcript cleavage protein, N-terminal domain"/>
    <property type="match status" value="1"/>
</dbReference>
<dbReference type="PROSITE" id="PS00829">
    <property type="entry name" value="GREAB_1"/>
    <property type="match status" value="1"/>
</dbReference>
<dbReference type="PROSITE" id="PS00830">
    <property type="entry name" value="GREAB_2"/>
    <property type="match status" value="1"/>
</dbReference>
<proteinExistence type="inferred from homology"/>
<protein>
    <recommendedName>
        <fullName evidence="1">Transcription elongation factor GreA</fullName>
    </recommendedName>
    <alternativeName>
        <fullName evidence="1">Transcript cleavage factor GreA</fullName>
    </alternativeName>
</protein>
<evidence type="ECO:0000255" key="1">
    <source>
        <dbReference type="HAMAP-Rule" id="MF_00105"/>
    </source>
</evidence>
<accession>A5ITD5</accession>
<feature type="chain" id="PRO_1000075891" description="Transcription elongation factor GreA">
    <location>
        <begin position="1"/>
        <end position="158"/>
    </location>
</feature>
<feature type="coiled-coil region" evidence="1">
    <location>
        <begin position="4"/>
        <end position="70"/>
    </location>
</feature>
<reference key="1">
    <citation type="submission" date="2007-05" db="EMBL/GenBank/DDBJ databases">
        <title>Complete sequence of chromosome of Staphylococcus aureus subsp. aureus JH9.</title>
        <authorList>
            <consortium name="US DOE Joint Genome Institute"/>
            <person name="Copeland A."/>
            <person name="Lucas S."/>
            <person name="Lapidus A."/>
            <person name="Barry K."/>
            <person name="Detter J.C."/>
            <person name="Glavina del Rio T."/>
            <person name="Hammon N."/>
            <person name="Israni S."/>
            <person name="Pitluck S."/>
            <person name="Chain P."/>
            <person name="Malfatti S."/>
            <person name="Shin M."/>
            <person name="Vergez L."/>
            <person name="Schmutz J."/>
            <person name="Larimer F."/>
            <person name="Land M."/>
            <person name="Hauser L."/>
            <person name="Kyrpides N."/>
            <person name="Kim E."/>
            <person name="Tomasz A."/>
            <person name="Richardson P."/>
        </authorList>
    </citation>
    <scope>NUCLEOTIDE SEQUENCE [LARGE SCALE GENOMIC DNA]</scope>
    <source>
        <strain>JH9</strain>
    </source>
</reference>
<comment type="function">
    <text evidence="1">Necessary for efficient RNA polymerase transcription elongation past template-encoded arresting sites. The arresting sites in DNA have the property of trapping a certain fraction of elongating RNA polymerases that pass through, resulting in locked ternary complexes. Cleavage of the nascent transcript by cleavage factors such as GreA or GreB allows the resumption of elongation from the new 3'terminus. GreA releases sequences of 2 to 3 nucleotides.</text>
</comment>
<comment type="similarity">
    <text evidence="1">Belongs to the GreA/GreB family.</text>
</comment>
<sequence length="158" mass="17743">MENQKQYPMTQEGFEKLERELEELKTVKRPEVVEKIKVARSFGDLSENSEYDAAKDEQGFIEQDIQRIEHMLRNALIIEDTGDNNVVKIGKTVTFVELPGDEEESYQIVGSAESDAFNGKISNESPMAKALIGKGLDDEVRVPLPNGGEMNVKIVNIQ</sequence>
<name>GREA_STAA9</name>